<feature type="chain" id="PRO_0000276526" description="Large ribosomal subunit protein bL33c">
    <location>
        <begin position="1"/>
        <end position="64"/>
    </location>
</feature>
<proteinExistence type="inferred from homology"/>
<reference key="1">
    <citation type="journal article" date="2007" name="Mol. Genet. Genomics">
        <title>Chloroplast genomes of the diatoms Phaeodactylum tricornutum and Thalassiosira pseudonana: comparison with other plastid genomes of the red lineage.</title>
        <authorList>
            <person name="Oudot-Le Secq M.-P."/>
            <person name="Grimwood J."/>
            <person name="Shapiro H."/>
            <person name="Armbrust E.V."/>
            <person name="Bowler C."/>
            <person name="Green B.R."/>
        </authorList>
    </citation>
    <scope>NUCLEOTIDE SEQUENCE [LARGE SCALE GENOMIC DNA]</scope>
    <source>
        <strain>CCMP1335 / NEPCC58 / CCAP 1085/12</strain>
    </source>
</reference>
<evidence type="ECO:0000255" key="1">
    <source>
        <dbReference type="HAMAP-Rule" id="MF_00294"/>
    </source>
</evidence>
<evidence type="ECO:0000305" key="2"/>
<organism>
    <name type="scientific">Thalassiosira pseudonana</name>
    <name type="common">Marine diatom</name>
    <name type="synonym">Cyclotella nana</name>
    <dbReference type="NCBI Taxonomy" id="35128"/>
    <lineage>
        <taxon>Eukaryota</taxon>
        <taxon>Sar</taxon>
        <taxon>Stramenopiles</taxon>
        <taxon>Ochrophyta</taxon>
        <taxon>Bacillariophyta</taxon>
        <taxon>Coscinodiscophyceae</taxon>
        <taxon>Thalassiosirophycidae</taxon>
        <taxon>Thalassiosirales</taxon>
        <taxon>Thalassiosiraceae</taxon>
        <taxon>Thalassiosira</taxon>
    </lineage>
</organism>
<keyword id="KW-0150">Chloroplast</keyword>
<keyword id="KW-0934">Plastid</keyword>
<keyword id="KW-0687">Ribonucleoprotein</keyword>
<keyword id="KW-0689">Ribosomal protein</keyword>
<geneLocation type="chloroplast"/>
<dbReference type="EMBL" id="EF067921">
    <property type="protein sequence ID" value="ABK20748.1"/>
    <property type="molecule type" value="Genomic_DNA"/>
</dbReference>
<dbReference type="RefSeq" id="YP_874525.1">
    <property type="nucleotide sequence ID" value="NC_008589.1"/>
</dbReference>
<dbReference type="SMR" id="A0T0R3"/>
<dbReference type="STRING" id="35128.A0T0R3"/>
<dbReference type="PaxDb" id="35128-Thapsdraft1243"/>
<dbReference type="GeneID" id="4524731"/>
<dbReference type="eggNOG" id="ENOG502S7HT">
    <property type="taxonomic scope" value="Eukaryota"/>
</dbReference>
<dbReference type="InParanoid" id="A0T0R3"/>
<dbReference type="OMA" id="ECTEHKA"/>
<dbReference type="GO" id="GO:0009507">
    <property type="term" value="C:chloroplast"/>
    <property type="evidence" value="ECO:0007669"/>
    <property type="project" value="UniProtKB-SubCell"/>
</dbReference>
<dbReference type="GO" id="GO:1990904">
    <property type="term" value="C:ribonucleoprotein complex"/>
    <property type="evidence" value="ECO:0007669"/>
    <property type="project" value="UniProtKB-KW"/>
</dbReference>
<dbReference type="GO" id="GO:0005840">
    <property type="term" value="C:ribosome"/>
    <property type="evidence" value="ECO:0007669"/>
    <property type="project" value="UniProtKB-KW"/>
</dbReference>
<dbReference type="GO" id="GO:0003735">
    <property type="term" value="F:structural constituent of ribosome"/>
    <property type="evidence" value="ECO:0007669"/>
    <property type="project" value="InterPro"/>
</dbReference>
<dbReference type="GO" id="GO:0006412">
    <property type="term" value="P:translation"/>
    <property type="evidence" value="ECO:0007669"/>
    <property type="project" value="UniProtKB-UniRule"/>
</dbReference>
<dbReference type="Gene3D" id="2.20.28.120">
    <property type="entry name" value="Ribosomal protein L33"/>
    <property type="match status" value="1"/>
</dbReference>
<dbReference type="HAMAP" id="MF_00294">
    <property type="entry name" value="Ribosomal_bL33"/>
    <property type="match status" value="1"/>
</dbReference>
<dbReference type="InterPro" id="IPR001705">
    <property type="entry name" value="Ribosomal_bL33"/>
</dbReference>
<dbReference type="InterPro" id="IPR018264">
    <property type="entry name" value="Ribosomal_bL33_CS"/>
</dbReference>
<dbReference type="InterPro" id="IPR038584">
    <property type="entry name" value="Ribosomal_bL33_sf"/>
</dbReference>
<dbReference type="InterPro" id="IPR011332">
    <property type="entry name" value="Ribosomal_zn-bd"/>
</dbReference>
<dbReference type="NCBIfam" id="NF001764">
    <property type="entry name" value="PRK00504.1"/>
    <property type="match status" value="1"/>
</dbReference>
<dbReference type="NCBIfam" id="NF001860">
    <property type="entry name" value="PRK00595.1"/>
    <property type="match status" value="1"/>
</dbReference>
<dbReference type="NCBIfam" id="TIGR01023">
    <property type="entry name" value="rpmG_bact"/>
    <property type="match status" value="1"/>
</dbReference>
<dbReference type="PANTHER" id="PTHR43168">
    <property type="entry name" value="50S RIBOSOMAL PROTEIN L33, CHLOROPLASTIC"/>
    <property type="match status" value="1"/>
</dbReference>
<dbReference type="PANTHER" id="PTHR43168:SF2">
    <property type="entry name" value="LARGE RIBOSOMAL SUBUNIT PROTEIN BL33C"/>
    <property type="match status" value="1"/>
</dbReference>
<dbReference type="Pfam" id="PF00471">
    <property type="entry name" value="Ribosomal_L33"/>
    <property type="match status" value="1"/>
</dbReference>
<dbReference type="SUPFAM" id="SSF57829">
    <property type="entry name" value="Zn-binding ribosomal proteins"/>
    <property type="match status" value="1"/>
</dbReference>
<dbReference type="PROSITE" id="PS00582">
    <property type="entry name" value="RIBOSOMAL_L33"/>
    <property type="match status" value="1"/>
</dbReference>
<accession>A0T0R3</accession>
<name>RK33_THAPS</name>
<comment type="subcellular location">
    <subcellularLocation>
        <location>Plastid</location>
        <location>Chloroplast</location>
    </subcellularLocation>
</comment>
<comment type="similarity">
    <text evidence="1">Belongs to the bacterial ribosomal protein bL33 family.</text>
</comment>
<gene>
    <name evidence="1" type="primary">rpl33</name>
</gene>
<protein>
    <recommendedName>
        <fullName evidence="1">Large ribosomal subunit protein bL33c</fullName>
    </recommendedName>
    <alternativeName>
        <fullName evidence="2">50S ribosomal protein L33, chloroplastic</fullName>
    </alternativeName>
</protein>
<sequence>MAKNKGTRILITLECTECRTNINKRSAGVSRYLTQKNRRNNPQRMELKKYCPHCNKPTIHKEIK</sequence>